<comment type="function">
    <text evidence="1">Catalyzes the ATP-dependent phosphorylation of L-homoserine to L-homoserine phosphate.</text>
</comment>
<comment type="catalytic activity">
    <reaction evidence="1">
        <text>L-homoserine + ATP = O-phospho-L-homoserine + ADP + H(+)</text>
        <dbReference type="Rhea" id="RHEA:13985"/>
        <dbReference type="ChEBI" id="CHEBI:15378"/>
        <dbReference type="ChEBI" id="CHEBI:30616"/>
        <dbReference type="ChEBI" id="CHEBI:57476"/>
        <dbReference type="ChEBI" id="CHEBI:57590"/>
        <dbReference type="ChEBI" id="CHEBI:456216"/>
        <dbReference type="EC" id="2.7.1.39"/>
    </reaction>
</comment>
<comment type="pathway">
    <text evidence="1">Amino-acid biosynthesis; L-threonine biosynthesis; L-threonine from L-aspartate: step 4/5.</text>
</comment>
<comment type="subcellular location">
    <subcellularLocation>
        <location evidence="1">Cytoplasm</location>
    </subcellularLocation>
</comment>
<comment type="similarity">
    <text evidence="1">Belongs to the GHMP kinase family. Homoserine kinase subfamily.</text>
</comment>
<keyword id="KW-0028">Amino-acid biosynthesis</keyword>
<keyword id="KW-0067">ATP-binding</keyword>
<keyword id="KW-0963">Cytoplasm</keyword>
<keyword id="KW-0418">Kinase</keyword>
<keyword id="KW-0547">Nucleotide-binding</keyword>
<keyword id="KW-0791">Threonine biosynthesis</keyword>
<keyword id="KW-0808">Transferase</keyword>
<reference key="1">
    <citation type="journal article" date="2007" name="J. Bacteriol.">
        <title>The complete genome sequence of the lactic acid bacterial paradigm Lactococcus lactis subsp. cremoris MG1363.</title>
        <authorList>
            <person name="Wegmann U."/>
            <person name="O'Connell-Motherway M."/>
            <person name="Zomer A."/>
            <person name="Buist G."/>
            <person name="Shearman C."/>
            <person name="Canchaya C."/>
            <person name="Ventura M."/>
            <person name="Goesmann A."/>
            <person name="Gasson M.J."/>
            <person name="Kuipers O.P."/>
            <person name="van Sinderen D."/>
            <person name="Kok J."/>
        </authorList>
    </citation>
    <scope>NUCLEOTIDE SEQUENCE [LARGE SCALE GENOMIC DNA]</scope>
    <source>
        <strain>MG1363</strain>
    </source>
</reference>
<feature type="chain" id="PRO_1000049138" description="Homoserine kinase">
    <location>
        <begin position="1"/>
        <end position="296"/>
    </location>
</feature>
<feature type="binding site" evidence="1">
    <location>
        <begin position="84"/>
        <end position="94"/>
    </location>
    <ligand>
        <name>ATP</name>
        <dbReference type="ChEBI" id="CHEBI:30616"/>
    </ligand>
</feature>
<accession>A2RKV6</accession>
<evidence type="ECO:0000255" key="1">
    <source>
        <dbReference type="HAMAP-Rule" id="MF_00384"/>
    </source>
</evidence>
<name>KHSE_LACLM</name>
<proteinExistence type="inferred from homology"/>
<organism>
    <name type="scientific">Lactococcus lactis subsp. cremoris (strain MG1363)</name>
    <dbReference type="NCBI Taxonomy" id="416870"/>
    <lineage>
        <taxon>Bacteria</taxon>
        <taxon>Bacillati</taxon>
        <taxon>Bacillota</taxon>
        <taxon>Bacilli</taxon>
        <taxon>Lactobacillales</taxon>
        <taxon>Streptococcaceae</taxon>
        <taxon>Lactococcus</taxon>
        <taxon>Lactococcus cremoris subsp. cremoris</taxon>
    </lineage>
</organism>
<gene>
    <name evidence="1" type="primary">thrB</name>
    <name type="ordered locus">llmg_1331</name>
</gene>
<sequence>MKIIVPATSANLGAGFDSIGIAVNLYLTVEVLGESRDWKIDHDLGENIPTDERNLLLTTLSAVLEDKNVALSAKFHLKMTSEVPLARGLGSSSSVIIAGIELANQLAKLNLTSDEKLKLACEIEGHPDNVAPALLGNLVIASTVAGKTSHIVADFPSCALLAFVPDYELKTVESRKVLPNELTYKEAVAASSIANVLTASLLTNNLEVAGQMMEADRFHESYRASLIPELQLLREIGHEFGAYGTYLSGAGPTVMLLVPDDKLTLLTEKIMEKNLTGHLYPLKIDNKGLQVEESVF</sequence>
<dbReference type="EC" id="2.7.1.39" evidence="1"/>
<dbReference type="EMBL" id="AM406671">
    <property type="protein sequence ID" value="CAL97922.1"/>
    <property type="molecule type" value="Genomic_DNA"/>
</dbReference>
<dbReference type="RefSeq" id="WP_011835204.1">
    <property type="nucleotide sequence ID" value="NC_009004.1"/>
</dbReference>
<dbReference type="SMR" id="A2RKV6"/>
<dbReference type="STRING" id="416870.llmg_1331"/>
<dbReference type="KEGG" id="llm:llmg_1331"/>
<dbReference type="eggNOG" id="COG0083">
    <property type="taxonomic scope" value="Bacteria"/>
</dbReference>
<dbReference type="HOGENOM" id="CLU_041243_0_0_9"/>
<dbReference type="OrthoDB" id="9769912at2"/>
<dbReference type="PhylomeDB" id="A2RKV6"/>
<dbReference type="UniPathway" id="UPA00050">
    <property type="reaction ID" value="UER00064"/>
</dbReference>
<dbReference type="Proteomes" id="UP000000364">
    <property type="component" value="Chromosome"/>
</dbReference>
<dbReference type="GO" id="GO:0005737">
    <property type="term" value="C:cytoplasm"/>
    <property type="evidence" value="ECO:0007669"/>
    <property type="project" value="UniProtKB-SubCell"/>
</dbReference>
<dbReference type="GO" id="GO:0005524">
    <property type="term" value="F:ATP binding"/>
    <property type="evidence" value="ECO:0007669"/>
    <property type="project" value="UniProtKB-UniRule"/>
</dbReference>
<dbReference type="GO" id="GO:0004413">
    <property type="term" value="F:homoserine kinase activity"/>
    <property type="evidence" value="ECO:0007669"/>
    <property type="project" value="UniProtKB-UniRule"/>
</dbReference>
<dbReference type="GO" id="GO:0009088">
    <property type="term" value="P:threonine biosynthetic process"/>
    <property type="evidence" value="ECO:0007669"/>
    <property type="project" value="UniProtKB-UniRule"/>
</dbReference>
<dbReference type="Gene3D" id="3.30.230.10">
    <property type="match status" value="1"/>
</dbReference>
<dbReference type="Gene3D" id="3.30.70.890">
    <property type="entry name" value="GHMP kinase, C-terminal domain"/>
    <property type="match status" value="1"/>
</dbReference>
<dbReference type="HAMAP" id="MF_00384">
    <property type="entry name" value="Homoser_kinase"/>
    <property type="match status" value="1"/>
</dbReference>
<dbReference type="InterPro" id="IPR013750">
    <property type="entry name" value="GHMP_kinase_C_dom"/>
</dbReference>
<dbReference type="InterPro" id="IPR036554">
    <property type="entry name" value="GHMP_kinase_C_sf"/>
</dbReference>
<dbReference type="InterPro" id="IPR006204">
    <property type="entry name" value="GHMP_kinase_N_dom"/>
</dbReference>
<dbReference type="InterPro" id="IPR006203">
    <property type="entry name" value="GHMP_knse_ATP-bd_CS"/>
</dbReference>
<dbReference type="InterPro" id="IPR000870">
    <property type="entry name" value="Homoserine_kinase"/>
</dbReference>
<dbReference type="InterPro" id="IPR020568">
    <property type="entry name" value="Ribosomal_Su5_D2-typ_SF"/>
</dbReference>
<dbReference type="InterPro" id="IPR014721">
    <property type="entry name" value="Ribsml_uS5_D2-typ_fold_subgr"/>
</dbReference>
<dbReference type="NCBIfam" id="TIGR00191">
    <property type="entry name" value="thrB"/>
    <property type="match status" value="1"/>
</dbReference>
<dbReference type="PANTHER" id="PTHR20861:SF1">
    <property type="entry name" value="HOMOSERINE KINASE"/>
    <property type="match status" value="1"/>
</dbReference>
<dbReference type="PANTHER" id="PTHR20861">
    <property type="entry name" value="HOMOSERINE/4-DIPHOSPHOCYTIDYL-2-C-METHYL-D-ERYTHRITOL KINASE"/>
    <property type="match status" value="1"/>
</dbReference>
<dbReference type="Pfam" id="PF08544">
    <property type="entry name" value="GHMP_kinases_C"/>
    <property type="match status" value="1"/>
</dbReference>
<dbReference type="Pfam" id="PF00288">
    <property type="entry name" value="GHMP_kinases_N"/>
    <property type="match status" value="1"/>
</dbReference>
<dbReference type="PIRSF" id="PIRSF000676">
    <property type="entry name" value="Homoser_kin"/>
    <property type="match status" value="1"/>
</dbReference>
<dbReference type="PRINTS" id="PR00958">
    <property type="entry name" value="HOMSERKINASE"/>
</dbReference>
<dbReference type="SUPFAM" id="SSF55060">
    <property type="entry name" value="GHMP Kinase, C-terminal domain"/>
    <property type="match status" value="1"/>
</dbReference>
<dbReference type="SUPFAM" id="SSF54211">
    <property type="entry name" value="Ribosomal protein S5 domain 2-like"/>
    <property type="match status" value="1"/>
</dbReference>
<dbReference type="PROSITE" id="PS00627">
    <property type="entry name" value="GHMP_KINASES_ATP"/>
    <property type="match status" value="1"/>
</dbReference>
<protein>
    <recommendedName>
        <fullName evidence="1">Homoserine kinase</fullName>
        <shortName evidence="1">HK</shortName>
        <shortName evidence="1">HSK</shortName>
        <ecNumber evidence="1">2.7.1.39</ecNumber>
    </recommendedName>
</protein>